<reference key="1">
    <citation type="journal article" date="1999" name="Mol. Biol. Evol.">
        <title>Sequence evolution of the CCR5 chemokine receptor gene in primates.</title>
        <authorList>
            <person name="Zhang Y.-W."/>
            <person name="Ryder O.A."/>
            <person name="Zhang Y.-P."/>
        </authorList>
    </citation>
    <scope>NUCLEOTIDE SEQUENCE [GENOMIC DNA]</scope>
</reference>
<organism>
    <name type="scientific">Pongo pygmaeus</name>
    <name type="common">Bornean orangutan</name>
    <dbReference type="NCBI Taxonomy" id="9600"/>
    <lineage>
        <taxon>Eukaryota</taxon>
        <taxon>Metazoa</taxon>
        <taxon>Chordata</taxon>
        <taxon>Craniata</taxon>
        <taxon>Vertebrata</taxon>
        <taxon>Euteleostomi</taxon>
        <taxon>Mammalia</taxon>
        <taxon>Eutheria</taxon>
        <taxon>Euarchontoglires</taxon>
        <taxon>Primates</taxon>
        <taxon>Haplorrhini</taxon>
        <taxon>Catarrhini</taxon>
        <taxon>Hominidae</taxon>
        <taxon>Pongo</taxon>
    </lineage>
</organism>
<accession>O97881</accession>
<feature type="chain" id="PRO_0000069276" description="C-C chemokine receptor type 5">
    <location>
        <begin position="1"/>
        <end position="352"/>
    </location>
</feature>
<feature type="topological domain" description="Extracellular" evidence="3">
    <location>
        <begin position="1"/>
        <end position="30"/>
    </location>
</feature>
<feature type="transmembrane region" description="Helical; Name=1" evidence="3">
    <location>
        <begin position="31"/>
        <end position="58"/>
    </location>
</feature>
<feature type="topological domain" description="Cytoplasmic" evidence="3">
    <location>
        <begin position="59"/>
        <end position="68"/>
    </location>
</feature>
<feature type="transmembrane region" description="Helical; Name=2" evidence="3">
    <location>
        <begin position="69"/>
        <end position="89"/>
    </location>
</feature>
<feature type="topological domain" description="Extracellular" evidence="3">
    <location>
        <begin position="90"/>
        <end position="102"/>
    </location>
</feature>
<feature type="transmembrane region" description="Helical; Name=3" evidence="3">
    <location>
        <begin position="103"/>
        <end position="124"/>
    </location>
</feature>
<feature type="topological domain" description="Cytoplasmic" evidence="3">
    <location>
        <begin position="125"/>
        <end position="141"/>
    </location>
</feature>
<feature type="transmembrane region" description="Helical; Name=4" evidence="3">
    <location>
        <begin position="142"/>
        <end position="166"/>
    </location>
</feature>
<feature type="topological domain" description="Extracellular" evidence="3">
    <location>
        <begin position="167"/>
        <end position="198"/>
    </location>
</feature>
<feature type="transmembrane region" description="Helical; Name=5" evidence="3">
    <location>
        <begin position="199"/>
        <end position="218"/>
    </location>
</feature>
<feature type="topological domain" description="Cytoplasmic" evidence="3">
    <location>
        <begin position="219"/>
        <end position="235"/>
    </location>
</feature>
<feature type="transmembrane region" description="Helical; Name=6" evidence="3">
    <location>
        <begin position="236"/>
        <end position="260"/>
    </location>
</feature>
<feature type="topological domain" description="Extracellular" evidence="3">
    <location>
        <begin position="261"/>
        <end position="277"/>
    </location>
</feature>
<feature type="transmembrane region" description="Helical; Name=7" evidence="3">
    <location>
        <begin position="278"/>
        <end position="301"/>
    </location>
</feature>
<feature type="topological domain" description="Cytoplasmic" evidence="3">
    <location>
        <begin position="302"/>
        <end position="352"/>
    </location>
</feature>
<feature type="modified residue" description="Sulfotyrosine" evidence="1">
    <location>
        <position position="3"/>
    </location>
</feature>
<feature type="modified residue" description="Sulfotyrosine" evidence="3">
    <location>
        <position position="10"/>
    </location>
</feature>
<feature type="modified residue" description="Sulfotyrosine" evidence="3">
    <location>
        <position position="14"/>
    </location>
</feature>
<feature type="modified residue" description="Sulfotyrosine" evidence="3">
    <location>
        <position position="15"/>
    </location>
</feature>
<feature type="modified residue" description="Phosphoserine; by BARK1" evidence="1">
    <location>
        <position position="336"/>
    </location>
</feature>
<feature type="modified residue" description="Phosphoserine; by BARK1" evidence="1">
    <location>
        <position position="337"/>
    </location>
</feature>
<feature type="modified residue" description="Phosphoserine; by BARK1" evidence="1">
    <location>
        <position position="342"/>
    </location>
</feature>
<feature type="modified residue" description="Phosphoserine; by BARK1" evidence="1">
    <location>
        <position position="349"/>
    </location>
</feature>
<feature type="lipid moiety-binding region" description="S-palmitoyl cysteine" evidence="1">
    <location>
        <position position="321"/>
    </location>
</feature>
<feature type="lipid moiety-binding region" description="S-palmitoyl cysteine" evidence="1">
    <location>
        <position position="323"/>
    </location>
</feature>
<feature type="lipid moiety-binding region" description="S-palmitoyl cysteine" evidence="1">
    <location>
        <position position="324"/>
    </location>
</feature>
<feature type="glycosylation site" description="O-linked (GalNAc...) serine" evidence="1">
    <location>
        <position position="6"/>
    </location>
</feature>
<feature type="glycosylation site" description="O-linked (GalNAc...) serine" evidence="1">
    <location>
        <position position="7"/>
    </location>
</feature>
<feature type="disulfide bond" evidence="1">
    <location>
        <begin position="20"/>
        <end position="269"/>
    </location>
</feature>
<feature type="disulfide bond" evidence="4">
    <location>
        <begin position="101"/>
        <end position="178"/>
    </location>
</feature>
<proteinExistence type="inferred from homology"/>
<gene>
    <name type="primary">CCR5</name>
    <name type="synonym">CMKBR5</name>
</gene>
<keyword id="KW-1003">Cell membrane</keyword>
<keyword id="KW-1015">Disulfide bond</keyword>
<keyword id="KW-0297">G-protein coupled receptor</keyword>
<keyword id="KW-0325">Glycoprotein</keyword>
<keyword id="KW-0449">Lipoprotein</keyword>
<keyword id="KW-0472">Membrane</keyword>
<keyword id="KW-0564">Palmitate</keyword>
<keyword id="KW-0597">Phosphoprotein</keyword>
<keyword id="KW-0675">Receptor</keyword>
<keyword id="KW-0765">Sulfation</keyword>
<keyword id="KW-0807">Transducer</keyword>
<keyword id="KW-0812">Transmembrane</keyword>
<keyword id="KW-1133">Transmembrane helix</keyword>
<name>CCR5_PONPY</name>
<protein>
    <recommendedName>
        <fullName>C-C chemokine receptor type 5</fullName>
        <shortName>C-C CKR-5</shortName>
        <shortName>CC-CKR-5</shortName>
        <shortName>CCR-5</shortName>
        <shortName>CCR5</shortName>
    </recommendedName>
    <cdAntigenName>CD195</cdAntigenName>
</protein>
<sequence>MDYQVSSPTYDIDYYTSEPCQKINVKQIAARLLPPLYSLVFIFGFVGNMLVILILINCKRLKSMTDIYLLNLAISDLFFLLTVPFWAHYAAAQWDFGNTMCQLLTGLYFIGFFSGIFFIILLTIDRYLAIVHAVFALKARTVTFGVVTSVITWVVAVFASLPGIIFTRSQKEGLHYTCSSHFPYSQYQFWKNFQTLKIVILGLVLPLLVMVICYSGILKTLLRCRNEKKRHRAVRLIFTIMIVYFLFWAPYNIVLLLNTFQEFFGLNNCSSSNRLDQAMQVTETLGMTHCCINPIIYAFVGEKFRNYLLVFFQKHIAKRFCKCCSIFQQEAPERASSVYTRSTGEQEISVGL</sequence>
<dbReference type="EMBL" id="AF075446">
    <property type="protein sequence ID" value="AAD19858.1"/>
    <property type="molecule type" value="Genomic_DNA"/>
</dbReference>
<dbReference type="RefSeq" id="XP_054339111.1">
    <property type="nucleotide sequence ID" value="XM_054483136.1"/>
</dbReference>
<dbReference type="BMRB" id="O97881"/>
<dbReference type="SMR" id="O97881"/>
<dbReference type="GlyCosmos" id="O97881">
    <property type="glycosylation" value="2 sites, No reported glycans"/>
</dbReference>
<dbReference type="GeneID" id="129033933"/>
<dbReference type="GO" id="GO:0005737">
    <property type="term" value="C:cytoplasm"/>
    <property type="evidence" value="ECO:0007669"/>
    <property type="project" value="TreeGrafter"/>
</dbReference>
<dbReference type="GO" id="GO:0009897">
    <property type="term" value="C:external side of plasma membrane"/>
    <property type="evidence" value="ECO:0000250"/>
    <property type="project" value="UniProtKB"/>
</dbReference>
<dbReference type="GO" id="GO:0016493">
    <property type="term" value="F:C-C chemokine receptor activity"/>
    <property type="evidence" value="ECO:0000250"/>
    <property type="project" value="UniProtKB"/>
</dbReference>
<dbReference type="GO" id="GO:0071791">
    <property type="term" value="F:chemokine (C-C motif) ligand 5 binding"/>
    <property type="evidence" value="ECO:0007669"/>
    <property type="project" value="TreeGrafter"/>
</dbReference>
<dbReference type="GO" id="GO:0019722">
    <property type="term" value="P:calcium-mediated signaling"/>
    <property type="evidence" value="ECO:0007669"/>
    <property type="project" value="TreeGrafter"/>
</dbReference>
<dbReference type="GO" id="GO:0060326">
    <property type="term" value="P:cell chemotaxis"/>
    <property type="evidence" value="ECO:0007669"/>
    <property type="project" value="TreeGrafter"/>
</dbReference>
<dbReference type="GO" id="GO:0006955">
    <property type="term" value="P:immune response"/>
    <property type="evidence" value="ECO:0007669"/>
    <property type="project" value="InterPro"/>
</dbReference>
<dbReference type="GO" id="GO:0006954">
    <property type="term" value="P:inflammatory response"/>
    <property type="evidence" value="ECO:0007669"/>
    <property type="project" value="InterPro"/>
</dbReference>
<dbReference type="GO" id="GO:0007204">
    <property type="term" value="P:positive regulation of cytosolic calcium ion concentration"/>
    <property type="evidence" value="ECO:0007669"/>
    <property type="project" value="TreeGrafter"/>
</dbReference>
<dbReference type="CDD" id="cd15184">
    <property type="entry name" value="7tmA_CCR5_CCR2"/>
    <property type="match status" value="1"/>
</dbReference>
<dbReference type="FunFam" id="1.20.1070.10:FF:000026">
    <property type="entry name" value="C-C chemokine receptor type 5"/>
    <property type="match status" value="1"/>
</dbReference>
<dbReference type="Gene3D" id="1.20.1070.10">
    <property type="entry name" value="Rhodopsin 7-helix transmembrane proteins"/>
    <property type="match status" value="1"/>
</dbReference>
<dbReference type="InterPro" id="IPR050119">
    <property type="entry name" value="CCR1-9-like"/>
</dbReference>
<dbReference type="InterPro" id="IPR002240">
    <property type="entry name" value="Chemokine_CCR5"/>
</dbReference>
<dbReference type="InterPro" id="IPR000355">
    <property type="entry name" value="Chemokine_rcpt"/>
</dbReference>
<dbReference type="InterPro" id="IPR000276">
    <property type="entry name" value="GPCR_Rhodpsn"/>
</dbReference>
<dbReference type="InterPro" id="IPR017452">
    <property type="entry name" value="GPCR_Rhodpsn_7TM"/>
</dbReference>
<dbReference type="PANTHER" id="PTHR10489:SF686">
    <property type="entry name" value="C-C CHEMOKINE RECEPTOR TYPE 5"/>
    <property type="match status" value="1"/>
</dbReference>
<dbReference type="PANTHER" id="PTHR10489">
    <property type="entry name" value="CELL ADHESION MOLECULE"/>
    <property type="match status" value="1"/>
</dbReference>
<dbReference type="Pfam" id="PF00001">
    <property type="entry name" value="7tm_1"/>
    <property type="match status" value="1"/>
</dbReference>
<dbReference type="PRINTS" id="PR00657">
    <property type="entry name" value="CCCHEMOKINER"/>
</dbReference>
<dbReference type="PRINTS" id="PR01110">
    <property type="entry name" value="CHEMOKINER5"/>
</dbReference>
<dbReference type="PRINTS" id="PR00237">
    <property type="entry name" value="GPCRRHODOPSN"/>
</dbReference>
<dbReference type="SUPFAM" id="SSF81321">
    <property type="entry name" value="Family A G protein-coupled receptor-like"/>
    <property type="match status" value="1"/>
</dbReference>
<dbReference type="PROSITE" id="PS00237">
    <property type="entry name" value="G_PROTEIN_RECEP_F1_1"/>
    <property type="match status" value="1"/>
</dbReference>
<dbReference type="PROSITE" id="PS50262">
    <property type="entry name" value="G_PROTEIN_RECEP_F1_2"/>
    <property type="match status" value="1"/>
</dbReference>
<evidence type="ECO:0000250" key="1">
    <source>
        <dbReference type="UniProtKB" id="P51681"/>
    </source>
</evidence>
<evidence type="ECO:0000250" key="2">
    <source>
        <dbReference type="UniProtKB" id="Q9XT76"/>
    </source>
</evidence>
<evidence type="ECO:0000255" key="3"/>
<evidence type="ECO:0000255" key="4">
    <source>
        <dbReference type="PROSITE-ProRule" id="PRU00521"/>
    </source>
</evidence>
<comment type="function">
    <text evidence="1">Receptor for a number of inflammatory CC-chemokines including CCL3/MIP-1-alpha, CCL4/MIP-1-beta and RANTES and subsequently transduces a signal by increasing the intracellular calcium ion level. May play a role in the control of granulocytic lineage proliferation or differentiation. Participates in T-lymphocyte migration to the infection site by acting as a chemotactic receptor.</text>
</comment>
<comment type="subunit">
    <text evidence="1">Interacts with PRAF2. Efficient ligand binding to CCL3/MIP-1alpha and CCL4/MIP-1beta requires sulfation, O-glycosylation and sialic acid modifications. Glycosylation on Ser-6 is required for efficient binding of CCL4. Interacts with GRK2. Interacts with ARRB1 and ARRB2. Interacts with CNIH4. Interacts with S100A4; this interaction stimulates T-lymphocyte chemotaxis.</text>
</comment>
<comment type="subcellular location">
    <subcellularLocation>
        <location evidence="2">Cell membrane</location>
        <topology evidence="2">Multi-pass membrane protein</topology>
    </subcellularLocation>
</comment>
<comment type="PTM">
    <text evidence="1">Sulfated on at least 2 of the N-terminal tyrosines. Sulfation is required for efficient binding of the chemokines, CCL3 and CCL4 (By similarity).</text>
</comment>
<comment type="PTM">
    <text evidence="1">Palmitoylation in the C-terminal is important for cell surface expression.</text>
</comment>
<comment type="PTM">
    <text evidence="1">Phosphorylation on serine residues in the C-terminal is stimulated by binding CC chemokines especially by APO-RANTES.</text>
</comment>
<comment type="PTM">
    <text evidence="1">O-glycosylated, but not N-glycosylated. Ser-6 appears to be the major site even if Ser-7 may be also O-glycosylated. Also sialylated glycans present which contribute to chemokine binding. Thr-16 and Ser-17 may also be glycosylated and, if so, with small moieties such as a T-antigen.</text>
</comment>
<comment type="similarity">
    <text evidence="4">Belongs to the G-protein coupled receptor 1 family.</text>
</comment>